<organism>
    <name type="scientific">Bos taurus</name>
    <name type="common">Bovine</name>
    <dbReference type="NCBI Taxonomy" id="9913"/>
    <lineage>
        <taxon>Eukaryota</taxon>
        <taxon>Metazoa</taxon>
        <taxon>Chordata</taxon>
        <taxon>Craniata</taxon>
        <taxon>Vertebrata</taxon>
        <taxon>Euteleostomi</taxon>
        <taxon>Mammalia</taxon>
        <taxon>Eutheria</taxon>
        <taxon>Laurasiatheria</taxon>
        <taxon>Artiodactyla</taxon>
        <taxon>Ruminantia</taxon>
        <taxon>Pecora</taxon>
        <taxon>Bovidae</taxon>
        <taxon>Bovinae</taxon>
        <taxon>Bos</taxon>
    </lineage>
</organism>
<reference key="1">
    <citation type="submission" date="2006-10" db="EMBL/GenBank/DDBJ databases">
        <authorList>
            <consortium name="NIH - Mammalian Gene Collection (MGC) project"/>
        </authorList>
    </citation>
    <scope>NUCLEOTIDE SEQUENCE [LARGE SCALE MRNA]</scope>
    <source>
        <strain>Hereford</strain>
        <tissue>Testis</tissue>
    </source>
</reference>
<accession>A0JNM1</accession>
<sequence>MNYSEKLTGAPPMTEVPLELLEEMLWFFRVEDATPWNCSMFVLAALVAIISFILLGRNIQANRNQKKLPPEKQTPEVLYLAEGGNKDDKNLTSLTETLLSEKPTLAQGEMEAKCSDVPRVHLPDPQEPES</sequence>
<keyword id="KW-1003">Cell membrane</keyword>
<keyword id="KW-0445">Lipid transport</keyword>
<keyword id="KW-0472">Membrane</keyword>
<keyword id="KW-1185">Reference proteome</keyword>
<keyword id="KW-0812">Transmembrane</keyword>
<keyword id="KW-1133">Transmembrane helix</keyword>
<keyword id="KW-0813">Transport</keyword>
<protein>
    <recommendedName>
        <fullName>Organic solute transporter subunit beta</fullName>
        <shortName>OST-beta</shortName>
    </recommendedName>
    <alternativeName>
        <fullName>Solute carrier family 51 subunit beta</fullName>
    </alternativeName>
</protein>
<gene>
    <name type="primary">SLC51B</name>
    <name type="synonym">OSTB</name>
</gene>
<name>OSTB_BOVIN</name>
<evidence type="ECO:0000250" key="1"/>
<evidence type="ECO:0000250" key="2">
    <source>
        <dbReference type="UniProtKB" id="Q80WK2"/>
    </source>
</evidence>
<evidence type="ECO:0000250" key="3">
    <source>
        <dbReference type="UniProtKB" id="Q86UW1"/>
    </source>
</evidence>
<evidence type="ECO:0000250" key="4">
    <source>
        <dbReference type="UniProtKB" id="Q86UW2"/>
    </source>
</evidence>
<evidence type="ECO:0000250" key="5">
    <source>
        <dbReference type="UniProtKB" id="Q90YM5"/>
    </source>
</evidence>
<evidence type="ECO:0000255" key="6"/>
<evidence type="ECO:0000256" key="7">
    <source>
        <dbReference type="SAM" id="MobiDB-lite"/>
    </source>
</evidence>
<evidence type="ECO:0000305" key="8"/>
<feature type="chain" id="PRO_0000331553" description="Organic solute transporter subunit beta">
    <location>
        <begin position="1"/>
        <end position="130"/>
    </location>
</feature>
<feature type="topological domain" description="Extracellular" evidence="6">
    <location>
        <begin position="1"/>
        <end position="35"/>
    </location>
</feature>
<feature type="transmembrane region" description="Helical" evidence="6">
    <location>
        <begin position="36"/>
        <end position="56"/>
    </location>
</feature>
<feature type="topological domain" description="Cytoplasmic" evidence="6">
    <location>
        <begin position="57"/>
        <end position="130"/>
    </location>
</feature>
<feature type="region of interest" description="Disordered" evidence="7">
    <location>
        <begin position="99"/>
        <end position="130"/>
    </location>
</feature>
<feature type="compositionally biased region" description="Basic and acidic residues" evidence="7">
    <location>
        <begin position="110"/>
        <end position="124"/>
    </location>
</feature>
<comment type="function">
    <text evidence="2 3 5">Essential component of the Ost-alpha/Ost-beta complex, a heterodimer that acts as the intestinal basolateral transporter responsible for bile acid export from enterocytes into portal blood. The Ost-alpha/Ost-beta complex efficiently transports the major species of bile acids (taurocholate). Taurine conjugates are transported more efficiently across the basolateral membrane than glycine-conjugated bile acids (By similarity). Can also transport steroids such as estrone 3-sulfate and dehydroepiandrosterone 3-sulfate, therefore playing a role in the enterohepatic circulation of sterols (By similarity). Able to transport eicosanoids such as prostaglandin E2 (By similarity). Modulates SLC51A glycosylation, membrane trafficking and stability activities (By similarity).</text>
</comment>
<comment type="catalytic activity">
    <reaction evidence="3">
        <text>taurocholate(out) = taurocholate(in)</text>
        <dbReference type="Rhea" id="RHEA:71703"/>
        <dbReference type="ChEBI" id="CHEBI:36257"/>
    </reaction>
</comment>
<comment type="catalytic activity">
    <reaction evidence="4">
        <text>estrone 3-sulfate(out) = estrone 3-sulfate(in)</text>
        <dbReference type="Rhea" id="RHEA:71835"/>
        <dbReference type="ChEBI" id="CHEBI:60050"/>
    </reaction>
</comment>
<comment type="catalytic activity">
    <reaction evidence="4">
        <text>dehydroepiandrosterone 3-sulfate(out) = dehydroepiandrosterone 3-sulfate(in)</text>
        <dbReference type="Rhea" id="RHEA:71839"/>
        <dbReference type="ChEBI" id="CHEBI:57905"/>
    </reaction>
</comment>
<comment type="catalytic activity">
    <reaction evidence="2">
        <text>tauroursodeoxycholate(out) = tauroursodeoxycholate(in)</text>
        <dbReference type="Rhea" id="RHEA:71843"/>
        <dbReference type="ChEBI" id="CHEBI:132028"/>
    </reaction>
</comment>
<comment type="catalytic activity">
    <reaction evidence="2">
        <text>glycoursodeoxycholate(out) = glycoursodeoxycholate(in)</text>
        <dbReference type="Rhea" id="RHEA:71847"/>
        <dbReference type="ChEBI" id="CHEBI:132030"/>
    </reaction>
</comment>
<comment type="catalytic activity">
    <reaction evidence="2">
        <text>glycocholate(out) = glycocholate(in)</text>
        <dbReference type="Rhea" id="RHEA:71851"/>
        <dbReference type="ChEBI" id="CHEBI:29746"/>
    </reaction>
</comment>
<comment type="catalytic activity">
    <reaction evidence="2">
        <text>taurochenodeoxycholate(out) = taurochenodeoxycholate(in)</text>
        <dbReference type="Rhea" id="RHEA:71855"/>
        <dbReference type="ChEBI" id="CHEBI:9407"/>
    </reaction>
</comment>
<comment type="catalytic activity">
    <reaction evidence="2">
        <text>glycochenodeoxycholate(out) = glycochenodeoxycholate(in)</text>
        <dbReference type="Rhea" id="RHEA:71859"/>
        <dbReference type="ChEBI" id="CHEBI:36252"/>
    </reaction>
</comment>
<comment type="catalytic activity">
    <reaction evidence="2">
        <text>taurodeoxycholate(out) = taurodeoxycholate(in)</text>
        <dbReference type="Rhea" id="RHEA:71863"/>
        <dbReference type="ChEBI" id="CHEBI:36261"/>
    </reaction>
</comment>
<comment type="catalytic activity">
    <reaction evidence="2">
        <text>glycodeoxycholate(out) = glycodeoxycholate(in)</text>
        <dbReference type="Rhea" id="RHEA:71867"/>
        <dbReference type="ChEBI" id="CHEBI:82982"/>
    </reaction>
</comment>
<comment type="catalytic activity">
    <reaction evidence="5">
        <text>prostaglandin E2(out) = prostaglandin E2(in)</text>
        <dbReference type="Rhea" id="RHEA:50984"/>
        <dbReference type="ChEBI" id="CHEBI:606564"/>
    </reaction>
</comment>
<comment type="subunit">
    <text evidence="1">Interacts with SLC51A. The Ost-alpha/Ost-beta complex is a heterodimer composed of alpha (SLC51A) and beta (SLC51B) subunit; induces the transport of SLC51A from the endoplasmic reticulum to the plasma membrane (By similarity).</text>
</comment>
<comment type="subcellular location">
    <subcellularLocation>
        <location evidence="1">Cell membrane</location>
        <topology evidence="1">Single-pass type I membrane protein</topology>
    </subcellularLocation>
    <text evidence="1">Mainly restricted to the lateral and basal membranes of ileal enterocytes.</text>
</comment>
<comment type="domain">
    <text evidence="1">The transmembrane domain (TM) is the major site of interaction with SLC51A. The extracellular-membrane interface is absolutely required for transport activity. The intracellular-membrane interface is necessary for establishing the correct membrane orientation that is essential for the heterodimer Ost-alpha/Ost-beta complex formation and transport activity at the cell membrane surface (By similarity).</text>
</comment>
<comment type="similarity">
    <text evidence="8">Belongs to the OST-beta family.</text>
</comment>
<dbReference type="EMBL" id="BC126778">
    <property type="protein sequence ID" value="AAI26779.1"/>
    <property type="molecule type" value="mRNA"/>
</dbReference>
<dbReference type="RefSeq" id="NP_001071335.1">
    <property type="nucleotide sequence ID" value="NM_001077867.2"/>
</dbReference>
<dbReference type="RefSeq" id="XP_005211336.1">
    <property type="nucleotide sequence ID" value="XM_005211279.5"/>
</dbReference>
<dbReference type="RefSeq" id="XP_005211337.1">
    <property type="nucleotide sequence ID" value="XM_005211280.5"/>
</dbReference>
<dbReference type="SMR" id="A0JNM1"/>
<dbReference type="FunCoup" id="A0JNM1">
    <property type="interactions" value="36"/>
</dbReference>
<dbReference type="STRING" id="9913.ENSBTAP00000004864"/>
<dbReference type="PaxDb" id="9913-ENSBTAP00000004864"/>
<dbReference type="Ensembl" id="ENSBTAT00000004864.4">
    <property type="protein sequence ID" value="ENSBTAP00000004864.3"/>
    <property type="gene ID" value="ENSBTAG00000003737.5"/>
</dbReference>
<dbReference type="GeneID" id="507185"/>
<dbReference type="KEGG" id="bta:507185"/>
<dbReference type="CTD" id="123264"/>
<dbReference type="VEuPathDB" id="HostDB:ENSBTAG00000003737"/>
<dbReference type="VGNC" id="VGNC:34901">
    <property type="gene designation" value="SLC51B"/>
</dbReference>
<dbReference type="eggNOG" id="ENOG502S380">
    <property type="taxonomic scope" value="Eukaryota"/>
</dbReference>
<dbReference type="GeneTree" id="ENSGT00390000010409"/>
<dbReference type="HOGENOM" id="CLU_158049_0_0_1"/>
<dbReference type="InParanoid" id="A0JNM1"/>
<dbReference type="OMA" id="EMLWVFR"/>
<dbReference type="OrthoDB" id="9899510at2759"/>
<dbReference type="TreeFam" id="TF337010"/>
<dbReference type="Reactome" id="R-BTA-159418">
    <property type="pathway name" value="Recycling of bile acids and salts"/>
</dbReference>
<dbReference type="Proteomes" id="UP000009136">
    <property type="component" value="Chromosome 10"/>
</dbReference>
<dbReference type="Bgee" id="ENSBTAG00000003737">
    <property type="expression patterns" value="Expressed in cardiac atrium and 58 other cell types or tissues"/>
</dbReference>
<dbReference type="GO" id="GO:0016323">
    <property type="term" value="C:basolateral plasma membrane"/>
    <property type="evidence" value="ECO:0000318"/>
    <property type="project" value="GO_Central"/>
</dbReference>
<dbReference type="GO" id="GO:0016020">
    <property type="term" value="C:membrane"/>
    <property type="evidence" value="ECO:0000250"/>
    <property type="project" value="UniProtKB"/>
</dbReference>
<dbReference type="GO" id="GO:0005886">
    <property type="term" value="C:plasma membrane"/>
    <property type="evidence" value="ECO:0000250"/>
    <property type="project" value="UniProtKB"/>
</dbReference>
<dbReference type="GO" id="GO:0032991">
    <property type="term" value="C:protein-containing complex"/>
    <property type="evidence" value="ECO:0000250"/>
    <property type="project" value="UniProtKB"/>
</dbReference>
<dbReference type="GO" id="GO:0015125">
    <property type="term" value="F:bile acid transmembrane transporter activity"/>
    <property type="evidence" value="ECO:0000318"/>
    <property type="project" value="GO_Central"/>
</dbReference>
<dbReference type="GO" id="GO:0046982">
    <property type="term" value="F:protein heterodimerization activity"/>
    <property type="evidence" value="ECO:0000250"/>
    <property type="project" value="UniProtKB"/>
</dbReference>
<dbReference type="GO" id="GO:0015721">
    <property type="term" value="P:bile acid and bile salt transport"/>
    <property type="evidence" value="ECO:0000250"/>
    <property type="project" value="UniProtKB"/>
</dbReference>
<dbReference type="GO" id="GO:0032782">
    <property type="term" value="P:bile acid secretion"/>
    <property type="evidence" value="ECO:0000318"/>
    <property type="project" value="GO_Central"/>
</dbReference>
<dbReference type="GO" id="GO:0070863">
    <property type="term" value="P:positive regulation of protein exit from endoplasmic reticulum"/>
    <property type="evidence" value="ECO:0000250"/>
    <property type="project" value="UniProtKB"/>
</dbReference>
<dbReference type="GO" id="GO:0060050">
    <property type="term" value="P:positive regulation of protein glycosylation"/>
    <property type="evidence" value="ECO:0000250"/>
    <property type="project" value="UniProtKB"/>
</dbReference>
<dbReference type="GO" id="GO:0090314">
    <property type="term" value="P:positive regulation of protein targeting to membrane"/>
    <property type="evidence" value="ECO:0000250"/>
    <property type="project" value="UniProtKB"/>
</dbReference>
<dbReference type="GO" id="GO:0031647">
    <property type="term" value="P:regulation of protein stability"/>
    <property type="evidence" value="ECO:0000250"/>
    <property type="project" value="UniProtKB"/>
</dbReference>
<dbReference type="InterPro" id="IPR052678">
    <property type="entry name" value="OST-beta_subunit"/>
</dbReference>
<dbReference type="InterPro" id="IPR029387">
    <property type="entry name" value="OSTbeta"/>
</dbReference>
<dbReference type="PANTHER" id="PTHR36129:SF1">
    <property type="entry name" value="ORGANIC SOLUTE TRANSPORTER SUBUNIT BETA"/>
    <property type="match status" value="1"/>
</dbReference>
<dbReference type="PANTHER" id="PTHR36129">
    <property type="entry name" value="ORGANIC SOLUTE TRANSPORTER SUBUNIT BETA-RELATED"/>
    <property type="match status" value="1"/>
</dbReference>
<dbReference type="Pfam" id="PF15048">
    <property type="entry name" value="OSTbeta"/>
    <property type="match status" value="1"/>
</dbReference>
<proteinExistence type="evidence at transcript level"/>